<protein>
    <recommendedName>
        <fullName>Lysozyme</fullName>
        <ecNumber>3.2.1.17</ecNumber>
    </recommendedName>
    <alternativeName>
        <fullName>1,4-beta-N-acetylmuramidase</fullName>
    </alternativeName>
</protein>
<organism>
    <name type="scientific">Antheraea mylitta</name>
    <name type="common">Tasar silkworm</name>
    <dbReference type="NCBI Taxonomy" id="34739"/>
    <lineage>
        <taxon>Eukaryota</taxon>
        <taxon>Metazoa</taxon>
        <taxon>Ecdysozoa</taxon>
        <taxon>Arthropoda</taxon>
        <taxon>Hexapoda</taxon>
        <taxon>Insecta</taxon>
        <taxon>Pterygota</taxon>
        <taxon>Neoptera</taxon>
        <taxon>Endopterygota</taxon>
        <taxon>Lepidoptera</taxon>
        <taxon>Glossata</taxon>
        <taxon>Ditrysia</taxon>
        <taxon>Bombycoidea</taxon>
        <taxon>Saturniidae</taxon>
        <taxon>Saturniinae</taxon>
        <taxon>Saturniini</taxon>
        <taxon>Antheraea</taxon>
    </lineage>
</organism>
<name>LYS_ANTMY</name>
<reference evidence="4 5" key="1">
    <citation type="journal article" date="2001" name="J. Biol. Chem.">
        <title>Structure of the induced antibacterial protein from tasar silkworm, Antheraea mylitta. Implications to molecular evolution.</title>
        <authorList>
            <person name="Jain D."/>
            <person name="Nair D.T."/>
            <person name="Swaminathan G.J."/>
            <person name="Abraham E.G."/>
            <person name="Nagaraju J."/>
            <person name="Salunke D.M."/>
        </authorList>
    </citation>
    <scope>PROTEIN SEQUENCE OF 1-32</scope>
    <scope>X-RAY CRYSTALLOGRAPHY (2.4 ANGSTROMS)</scope>
</reference>
<comment type="function">
    <text evidence="4">Lysozymes have primarily a bacteriolytic function; those in tissues and body fluids are associated with the monocyte-macrophage system and enhance the activity of immunoagents.</text>
</comment>
<comment type="catalytic activity">
    <reaction>
        <text>Hydrolysis of (1-&gt;4)-beta-linkages between N-acetylmuramic acid and N-acetyl-D-glucosamine residues in a peptidoglycan and between N-acetyl-D-glucosamine residues in chitodextrins.</text>
        <dbReference type="EC" id="3.2.1.17"/>
    </reaction>
</comment>
<comment type="subunit">
    <text evidence="3">Monomer.</text>
</comment>
<comment type="similarity">
    <text evidence="2">Belongs to the glycosyl hydrolase 22 family.</text>
</comment>
<proteinExistence type="evidence at protein level"/>
<accession>Q7SID7</accession>
<sequence>KRFTRCGLVNELRKQGFDENLMRDWVCLVENESARYTDKIANVNKNGSRDYGLFQINDKYWCSKGSTPGKDCNVTCSQLLTDDITVASTCAKKIYKRTKFDAWSGWDNHCNHSNPDISSC</sequence>
<dbReference type="EC" id="3.2.1.17"/>
<dbReference type="PDB" id="1IIZ">
    <property type="method" value="X-ray"/>
    <property type="resolution" value="2.40 A"/>
    <property type="chains" value="A=1-120"/>
</dbReference>
<dbReference type="PDBsum" id="1IIZ"/>
<dbReference type="SMR" id="Q7SID7"/>
<dbReference type="CAZy" id="GH22">
    <property type="family name" value="Glycoside Hydrolase Family 22"/>
</dbReference>
<dbReference type="EvolutionaryTrace" id="Q7SID7"/>
<dbReference type="GO" id="GO:0003796">
    <property type="term" value="F:lysozyme activity"/>
    <property type="evidence" value="ECO:0007669"/>
    <property type="project" value="UniProtKB-EC"/>
</dbReference>
<dbReference type="GO" id="GO:0042742">
    <property type="term" value="P:defense response to bacterium"/>
    <property type="evidence" value="ECO:0007669"/>
    <property type="project" value="UniProtKB-KW"/>
</dbReference>
<dbReference type="GO" id="GO:0031640">
    <property type="term" value="P:killing of cells of another organism"/>
    <property type="evidence" value="ECO:0007669"/>
    <property type="project" value="UniProtKB-KW"/>
</dbReference>
<dbReference type="CDD" id="cd16899">
    <property type="entry name" value="LYZ_C_invert"/>
    <property type="match status" value="1"/>
</dbReference>
<dbReference type="FunFam" id="1.10.530.10:FF:000001">
    <property type="entry name" value="Lysozyme C"/>
    <property type="match status" value="1"/>
</dbReference>
<dbReference type="Gene3D" id="1.10.530.10">
    <property type="match status" value="1"/>
</dbReference>
<dbReference type="InterPro" id="IPR001916">
    <property type="entry name" value="Glyco_hydro_22"/>
</dbReference>
<dbReference type="InterPro" id="IPR019799">
    <property type="entry name" value="Glyco_hydro_22_CS"/>
</dbReference>
<dbReference type="InterPro" id="IPR000974">
    <property type="entry name" value="Glyco_hydro_22_lys"/>
</dbReference>
<dbReference type="InterPro" id="IPR023346">
    <property type="entry name" value="Lysozyme-like_dom_sf"/>
</dbReference>
<dbReference type="PANTHER" id="PTHR11407">
    <property type="entry name" value="LYSOZYME C"/>
    <property type="match status" value="1"/>
</dbReference>
<dbReference type="PANTHER" id="PTHR11407:SF63">
    <property type="entry name" value="LYSOZYME C"/>
    <property type="match status" value="1"/>
</dbReference>
<dbReference type="Pfam" id="PF00062">
    <property type="entry name" value="Lys"/>
    <property type="match status" value="1"/>
</dbReference>
<dbReference type="PRINTS" id="PR00137">
    <property type="entry name" value="LYSOZYME"/>
</dbReference>
<dbReference type="PRINTS" id="PR00135">
    <property type="entry name" value="LYZLACT"/>
</dbReference>
<dbReference type="SMART" id="SM00263">
    <property type="entry name" value="LYZ1"/>
    <property type="match status" value="1"/>
</dbReference>
<dbReference type="SUPFAM" id="SSF53955">
    <property type="entry name" value="Lysozyme-like"/>
    <property type="match status" value="1"/>
</dbReference>
<dbReference type="PROSITE" id="PS00128">
    <property type="entry name" value="GLYCOSYL_HYDROL_F22_1"/>
    <property type="match status" value="1"/>
</dbReference>
<dbReference type="PROSITE" id="PS51348">
    <property type="entry name" value="GLYCOSYL_HYDROL_F22_2"/>
    <property type="match status" value="1"/>
</dbReference>
<feature type="chain" id="PRO_0000235825" description="Lysozyme">
    <location>
        <begin position="1"/>
        <end position="120"/>
    </location>
</feature>
<feature type="domain" description="C-type lysozyme" evidence="2">
    <location>
        <begin position="1"/>
        <end position="120"/>
    </location>
</feature>
<feature type="active site" evidence="1 2">
    <location>
        <position position="32"/>
    </location>
</feature>
<feature type="active site" evidence="1 2">
    <location>
        <position position="50"/>
    </location>
</feature>
<feature type="disulfide bond" evidence="2 3">
    <location>
        <begin position="6"/>
        <end position="120"/>
    </location>
</feature>
<feature type="disulfide bond" evidence="2 3">
    <location>
        <begin position="27"/>
        <end position="110"/>
    </location>
</feature>
<feature type="disulfide bond" evidence="2 3">
    <location>
        <begin position="62"/>
        <end position="76"/>
    </location>
</feature>
<feature type="disulfide bond" evidence="2 3">
    <location>
        <begin position="72"/>
        <end position="90"/>
    </location>
</feature>
<feature type="helix" evidence="6">
    <location>
        <begin position="5"/>
        <end position="14"/>
    </location>
</feature>
<feature type="helix" evidence="6">
    <location>
        <begin position="19"/>
        <end position="21"/>
    </location>
</feature>
<feature type="helix" evidence="6">
    <location>
        <begin position="22"/>
        <end position="32"/>
    </location>
</feature>
<feature type="turn" evidence="6">
    <location>
        <begin position="33"/>
        <end position="35"/>
    </location>
</feature>
<feature type="strand" evidence="6">
    <location>
        <begin position="36"/>
        <end position="38"/>
    </location>
</feature>
<feature type="strand" evidence="6">
    <location>
        <begin position="45"/>
        <end position="47"/>
    </location>
</feature>
<feature type="turn" evidence="6">
    <location>
        <begin position="52"/>
        <end position="55"/>
    </location>
</feature>
<feature type="turn" evidence="6">
    <location>
        <begin position="58"/>
        <end position="61"/>
    </location>
</feature>
<feature type="strand" evidence="6">
    <location>
        <begin position="62"/>
        <end position="67"/>
    </location>
</feature>
<feature type="helix" evidence="6">
    <location>
        <begin position="76"/>
        <end position="80"/>
    </location>
</feature>
<feature type="strand" evidence="6">
    <location>
        <begin position="81"/>
        <end position="83"/>
    </location>
</feature>
<feature type="helix" evidence="6">
    <location>
        <begin position="85"/>
        <end position="98"/>
    </location>
</feature>
<feature type="turn" evidence="6">
    <location>
        <begin position="99"/>
        <end position="102"/>
    </location>
</feature>
<feature type="helix" evidence="6">
    <location>
        <begin position="104"/>
        <end position="109"/>
    </location>
</feature>
<feature type="strand" evidence="6">
    <location>
        <begin position="110"/>
        <end position="112"/>
    </location>
</feature>
<evidence type="ECO:0000250" key="1">
    <source>
        <dbReference type="UniProtKB" id="P00698"/>
    </source>
</evidence>
<evidence type="ECO:0000255" key="2">
    <source>
        <dbReference type="PROSITE-ProRule" id="PRU00680"/>
    </source>
</evidence>
<evidence type="ECO:0000269" key="3">
    <source>
    </source>
</evidence>
<evidence type="ECO:0000305" key="4"/>
<evidence type="ECO:0000312" key="5">
    <source>
        <dbReference type="PDB" id="1IIZ"/>
    </source>
</evidence>
<evidence type="ECO:0007829" key="6">
    <source>
        <dbReference type="PDB" id="1IIZ"/>
    </source>
</evidence>
<keyword id="KW-0002">3D-structure</keyword>
<keyword id="KW-0929">Antimicrobial</keyword>
<keyword id="KW-0081">Bacteriolytic enzyme</keyword>
<keyword id="KW-0903">Direct protein sequencing</keyword>
<keyword id="KW-1015">Disulfide bond</keyword>
<keyword id="KW-0326">Glycosidase</keyword>
<keyword id="KW-0378">Hydrolase</keyword>